<organism>
    <name type="scientific">Bos taurus</name>
    <name type="common">Bovine</name>
    <dbReference type="NCBI Taxonomy" id="9913"/>
    <lineage>
        <taxon>Eukaryota</taxon>
        <taxon>Metazoa</taxon>
        <taxon>Chordata</taxon>
        <taxon>Craniata</taxon>
        <taxon>Vertebrata</taxon>
        <taxon>Euteleostomi</taxon>
        <taxon>Mammalia</taxon>
        <taxon>Eutheria</taxon>
        <taxon>Laurasiatheria</taxon>
        <taxon>Artiodactyla</taxon>
        <taxon>Ruminantia</taxon>
        <taxon>Pecora</taxon>
        <taxon>Bovidae</taxon>
        <taxon>Bovinae</taxon>
        <taxon>Bos</taxon>
    </lineage>
</organism>
<sequence length="265" mass="29957">MSAAPLVGYSSSGSEDEAEAGARVRPGAEGRSRGQSPLPGQRLPVPDSVLHMFPSTEEGPVDDSAKHGGRVRTFPHERGNWATHVYIPYEAREEFLDLLDALLCHAQTYVPRLVRMEAFHLSLSQSVVLRHHWILPFVQALKDRVASFHRFCFTTDQVKIYTNQEKTRTFVGLEVTSGHAHFLDLVAEVDRVMEEFDLSTFYQDPSFHISLAWCVGDARLQMEGPCLQELQGIVDEFEDSEMLLRAYAEQIRCKSGNKFFSMPLK</sequence>
<comment type="function">
    <text evidence="1">3'-5' RNA exonuclease that trims the 3' end of oligo(U) and oligo(A) tracts of the pre-U6 small nuclear RNA (snRNA) molecule, leading to the formation of a mature U6 snRNA 3' end-terminated with a 2',3'-cyclic phosphate. Participates in the U6 snRNA 3' end processing that prevents U6 snRNA degradation. In addition also removes uridines from the 3' end of U6atac snRNA and possibly the vault RNA VTRNA1-1.</text>
</comment>
<comment type="catalytic activity">
    <reaction evidence="1">
        <text>a 3'-end uridylyl-uridine-RNA = a 3'-end 2',3'-cyclophospho-uridine-RNA + uridine</text>
        <dbReference type="Rhea" id="RHEA:46052"/>
        <dbReference type="Rhea" id="RHEA-COMP:17384"/>
        <dbReference type="Rhea" id="RHEA-COMP:17385"/>
        <dbReference type="ChEBI" id="CHEBI:16704"/>
        <dbReference type="ChEBI" id="CHEBI:85643"/>
        <dbReference type="ChEBI" id="CHEBI:85644"/>
    </reaction>
    <physiologicalReaction direction="left-to-right" evidence="1">
        <dbReference type="Rhea" id="RHEA:46053"/>
    </physiologicalReaction>
</comment>
<comment type="catalytic activity">
    <reaction evidence="1">
        <text>a 3'-end uridylyl-adenosine-RNA = a 3'-end 2',3'-cyclophospho-uridine-RNA + adenosine</text>
        <dbReference type="Rhea" id="RHEA:67896"/>
        <dbReference type="Rhea" id="RHEA-COMP:17385"/>
        <dbReference type="Rhea" id="RHEA-COMP:17386"/>
        <dbReference type="ChEBI" id="CHEBI:16335"/>
        <dbReference type="ChEBI" id="CHEBI:85644"/>
        <dbReference type="ChEBI" id="CHEBI:176518"/>
    </reaction>
    <physiologicalReaction direction="left-to-right" evidence="1">
        <dbReference type="Rhea" id="RHEA:67897"/>
    </physiologicalReaction>
</comment>
<comment type="subunit">
    <text evidence="1">Interacts with PLRG1, CDC5L and PRPF19.</text>
</comment>
<comment type="subcellular location">
    <subcellularLocation>
        <location evidence="2">Nucleus</location>
    </subcellularLocation>
</comment>
<comment type="similarity">
    <text evidence="2">Belongs to the 2H phosphoesterase superfamily. USB1 family.</text>
</comment>
<protein>
    <recommendedName>
        <fullName evidence="1">U6 snRNA phosphodiesterase 1</fullName>
    </recommendedName>
    <alternativeName>
        <fullName evidence="1">3'-5' RNA exonuclease USB1</fullName>
        <ecNumber evidence="1">4.6.1.-</ecNumber>
    </alternativeName>
</protein>
<feature type="chain" id="PRO_0000274390" description="U6 snRNA phosphodiesterase 1">
    <location>
        <begin position="1"/>
        <end position="265"/>
    </location>
</feature>
<feature type="region of interest" description="Disordered" evidence="3">
    <location>
        <begin position="1"/>
        <end position="67"/>
    </location>
</feature>
<feature type="compositionally biased region" description="Basic and acidic residues" evidence="3">
    <location>
        <begin position="20"/>
        <end position="32"/>
    </location>
</feature>
<feature type="active site" description="Proton acceptor" evidence="2">
    <location>
        <position position="120"/>
    </location>
</feature>
<feature type="active site" description="Proton donor" evidence="2">
    <location>
        <position position="208"/>
    </location>
</feature>
<feature type="binding site" evidence="1">
    <location>
        <begin position="120"/>
        <end position="122"/>
    </location>
    <ligand>
        <name>AMP</name>
        <dbReference type="ChEBI" id="CHEBI:456215"/>
    </ligand>
</feature>
<feature type="binding site" evidence="1">
    <location>
        <position position="164"/>
    </location>
    <ligand>
        <name>UMP</name>
        <dbReference type="ChEBI" id="CHEBI:57865"/>
    </ligand>
</feature>
<feature type="binding site" evidence="1">
    <location>
        <position position="202"/>
    </location>
    <ligand>
        <name>AMP</name>
        <dbReference type="ChEBI" id="CHEBI:456215"/>
    </ligand>
</feature>
<feature type="binding site" evidence="1">
    <location>
        <position position="202"/>
    </location>
    <ligand>
        <name>UMP</name>
        <dbReference type="ChEBI" id="CHEBI:57865"/>
    </ligand>
</feature>
<feature type="binding site" evidence="1">
    <location>
        <begin position="204"/>
        <end position="210"/>
    </location>
    <ligand>
        <name>AMP</name>
        <dbReference type="ChEBI" id="CHEBI:456215"/>
    </ligand>
</feature>
<feature type="binding site" evidence="1">
    <location>
        <begin position="206"/>
        <end position="210"/>
    </location>
    <ligand>
        <name>UMP</name>
        <dbReference type="ChEBI" id="CHEBI:57865"/>
    </ligand>
</feature>
<accession>Q0II50</accession>
<name>USB1_BOVIN</name>
<keyword id="KW-0378">Hydrolase</keyword>
<keyword id="KW-0456">Lyase</keyword>
<keyword id="KW-0540">Nuclease</keyword>
<keyword id="KW-0539">Nucleus</keyword>
<keyword id="KW-1185">Reference proteome</keyword>
<gene>
    <name evidence="2" type="primary">USB1</name>
</gene>
<evidence type="ECO:0000250" key="1">
    <source>
        <dbReference type="UniProtKB" id="Q9BQ65"/>
    </source>
</evidence>
<evidence type="ECO:0000255" key="2">
    <source>
        <dbReference type="HAMAP-Rule" id="MF_03040"/>
    </source>
</evidence>
<evidence type="ECO:0000256" key="3">
    <source>
        <dbReference type="SAM" id="MobiDB-lite"/>
    </source>
</evidence>
<dbReference type="EC" id="4.6.1.-" evidence="1"/>
<dbReference type="EMBL" id="BC122807">
    <property type="protein sequence ID" value="AAI22808.1"/>
    <property type="molecule type" value="mRNA"/>
</dbReference>
<dbReference type="RefSeq" id="NP_001068945.1">
    <property type="nucleotide sequence ID" value="NM_001075477.2"/>
</dbReference>
<dbReference type="SMR" id="Q0II50"/>
<dbReference type="FunCoup" id="Q0II50">
    <property type="interactions" value="1820"/>
</dbReference>
<dbReference type="STRING" id="9913.ENSBTAP00000020923"/>
<dbReference type="PaxDb" id="9913-ENSBTAP00000020923"/>
<dbReference type="Ensembl" id="ENSBTAT00000020923.3">
    <property type="protein sequence ID" value="ENSBTAP00000020923.2"/>
    <property type="gene ID" value="ENSBTAG00000015758.4"/>
</dbReference>
<dbReference type="GeneID" id="510934"/>
<dbReference type="KEGG" id="bta:510934"/>
<dbReference type="CTD" id="79650"/>
<dbReference type="VEuPathDB" id="HostDB:ENSBTAG00000015758"/>
<dbReference type="VGNC" id="VGNC:36703">
    <property type="gene designation" value="USB1"/>
</dbReference>
<dbReference type="eggNOG" id="KOG3102">
    <property type="taxonomic scope" value="Eukaryota"/>
</dbReference>
<dbReference type="GeneTree" id="ENSGT00390000004596"/>
<dbReference type="HOGENOM" id="CLU_057212_2_0_1"/>
<dbReference type="InParanoid" id="Q0II50"/>
<dbReference type="OMA" id="KTVVLQY"/>
<dbReference type="OrthoDB" id="49151at2759"/>
<dbReference type="TreeFam" id="TF324364"/>
<dbReference type="Proteomes" id="UP000009136">
    <property type="component" value="Chromosome 18"/>
</dbReference>
<dbReference type="Bgee" id="ENSBTAG00000015758">
    <property type="expression patterns" value="Expressed in neutrophil and 104 other cell types or tissues"/>
</dbReference>
<dbReference type="GO" id="GO:0045171">
    <property type="term" value="C:intercellular bridge"/>
    <property type="evidence" value="ECO:0007669"/>
    <property type="project" value="Ensembl"/>
</dbReference>
<dbReference type="GO" id="GO:0005654">
    <property type="term" value="C:nucleoplasm"/>
    <property type="evidence" value="ECO:0007669"/>
    <property type="project" value="Ensembl"/>
</dbReference>
<dbReference type="GO" id="GO:0005634">
    <property type="term" value="C:nucleus"/>
    <property type="evidence" value="ECO:0000250"/>
    <property type="project" value="UniProtKB"/>
</dbReference>
<dbReference type="GO" id="GO:0000175">
    <property type="term" value="F:3'-5'-RNA exonuclease activity"/>
    <property type="evidence" value="ECO:0000250"/>
    <property type="project" value="UniProtKB"/>
</dbReference>
<dbReference type="GO" id="GO:0016829">
    <property type="term" value="F:lyase activity"/>
    <property type="evidence" value="ECO:0007669"/>
    <property type="project" value="UniProtKB-KW"/>
</dbReference>
<dbReference type="GO" id="GO:1990838">
    <property type="term" value="F:poly(U)-specific exoribonuclease activity, producing 3' uridine cyclic phosphate ends"/>
    <property type="evidence" value="ECO:0000250"/>
    <property type="project" value="UniProtKB"/>
</dbReference>
<dbReference type="GO" id="GO:0008380">
    <property type="term" value="P:RNA splicing"/>
    <property type="evidence" value="ECO:0000250"/>
    <property type="project" value="UniProtKB"/>
</dbReference>
<dbReference type="GO" id="GO:0034472">
    <property type="term" value="P:snRNA 3'-end processing"/>
    <property type="evidence" value="ECO:0000250"/>
    <property type="project" value="UniProtKB"/>
</dbReference>
<dbReference type="GO" id="GO:0034477">
    <property type="term" value="P:U6 snRNA 3'-end processing"/>
    <property type="evidence" value="ECO:0000250"/>
    <property type="project" value="UniProtKB"/>
</dbReference>
<dbReference type="FunFam" id="3.90.1140.10:FF:000006">
    <property type="entry name" value="U6 snRNA phosphodiesterase"/>
    <property type="match status" value="1"/>
</dbReference>
<dbReference type="Gene3D" id="3.90.1140.10">
    <property type="entry name" value="Cyclic phosphodiesterase"/>
    <property type="match status" value="1"/>
</dbReference>
<dbReference type="HAMAP" id="MF_03040">
    <property type="entry name" value="USB1"/>
    <property type="match status" value="1"/>
</dbReference>
<dbReference type="InterPro" id="IPR009097">
    <property type="entry name" value="Cyclic_Pdiesterase"/>
</dbReference>
<dbReference type="InterPro" id="IPR027521">
    <property type="entry name" value="Usb1"/>
</dbReference>
<dbReference type="PANTHER" id="PTHR13522">
    <property type="entry name" value="U6 SNRNA PHOSPHODIESTERASE 1"/>
    <property type="match status" value="1"/>
</dbReference>
<dbReference type="PANTHER" id="PTHR13522:SF3">
    <property type="entry name" value="U6 SNRNA PHOSPHODIESTERASE 1"/>
    <property type="match status" value="1"/>
</dbReference>
<dbReference type="Pfam" id="PF09749">
    <property type="entry name" value="HVSL"/>
    <property type="match status" value="1"/>
</dbReference>
<dbReference type="SUPFAM" id="SSF55144">
    <property type="entry name" value="LigT-like"/>
    <property type="match status" value="1"/>
</dbReference>
<proteinExistence type="evidence at transcript level"/>
<reference key="1">
    <citation type="submission" date="2006-08" db="EMBL/GenBank/DDBJ databases">
        <authorList>
            <consortium name="NIH - Mammalian Gene Collection (MGC) project"/>
        </authorList>
    </citation>
    <scope>NUCLEOTIDE SEQUENCE [LARGE SCALE MRNA]</scope>
    <source>
        <strain>Hereford</strain>
        <tissue>Heart ventricle</tissue>
    </source>
</reference>